<name>M3K6_HUMAN</name>
<keyword id="KW-0025">Alternative splicing</keyword>
<keyword id="KW-0067">ATP-binding</keyword>
<keyword id="KW-0175">Coiled coil</keyword>
<keyword id="KW-0418">Kinase</keyword>
<keyword id="KW-0460">Magnesium</keyword>
<keyword id="KW-0479">Metal-binding</keyword>
<keyword id="KW-0547">Nucleotide-binding</keyword>
<keyword id="KW-0597">Phosphoprotein</keyword>
<keyword id="KW-1267">Proteomics identification</keyword>
<keyword id="KW-1185">Reference proteome</keyword>
<keyword id="KW-0723">Serine/threonine-protein kinase</keyword>
<keyword id="KW-0808">Transferase</keyword>
<gene>
    <name type="primary">MAP3K6</name>
    <name type="synonym">ASK2</name>
    <name type="synonym">MAPKKK6</name>
    <name type="synonym">MEKK6</name>
</gene>
<comment type="function">
    <text evidence="9 11">Component of a protein kinase signal transduction cascade. Activates the JNK, but not ERK or p38 kinase pathways.</text>
</comment>
<comment type="catalytic activity">
    <reaction>
        <text>L-seryl-[protein] + ATP = O-phospho-L-seryl-[protein] + ADP + H(+)</text>
        <dbReference type="Rhea" id="RHEA:17989"/>
        <dbReference type="Rhea" id="RHEA-COMP:9863"/>
        <dbReference type="Rhea" id="RHEA-COMP:11604"/>
        <dbReference type="ChEBI" id="CHEBI:15378"/>
        <dbReference type="ChEBI" id="CHEBI:29999"/>
        <dbReference type="ChEBI" id="CHEBI:30616"/>
        <dbReference type="ChEBI" id="CHEBI:83421"/>
        <dbReference type="ChEBI" id="CHEBI:456216"/>
        <dbReference type="EC" id="2.7.11.25"/>
    </reaction>
</comment>
<comment type="catalytic activity">
    <reaction>
        <text>L-threonyl-[protein] + ATP = O-phospho-L-threonyl-[protein] + ADP + H(+)</text>
        <dbReference type="Rhea" id="RHEA:46608"/>
        <dbReference type="Rhea" id="RHEA-COMP:11060"/>
        <dbReference type="Rhea" id="RHEA-COMP:11605"/>
        <dbReference type="ChEBI" id="CHEBI:15378"/>
        <dbReference type="ChEBI" id="CHEBI:30013"/>
        <dbReference type="ChEBI" id="CHEBI:30616"/>
        <dbReference type="ChEBI" id="CHEBI:61977"/>
        <dbReference type="ChEBI" id="CHEBI:456216"/>
        <dbReference type="EC" id="2.7.11.25"/>
    </reaction>
</comment>
<comment type="cofactor">
    <cofactor evidence="1">
        <name>Mg(2+)</name>
        <dbReference type="ChEBI" id="CHEBI:18420"/>
    </cofactor>
</comment>
<comment type="activity regulation">
    <text evidence="9">Activated by phosphorylation on Thr-806. Catalytically active only when complexed with MAP3K5, with MAP3K5 supporting the stability and the active configuration of MAP3K6 and MAP3K6 activating MAP3K5 by direct phosphorylation.</text>
</comment>
<comment type="subunit">
    <text>Binds both upstream activators and downstream substrates in multimolecular complexes.</text>
</comment>
<comment type="interaction">
    <interactant intactId="EBI-1254761">
        <id>O95382</id>
    </interactant>
    <interactant intactId="EBI-476295">
        <id>P31947</id>
        <label>SFN</label>
    </interactant>
    <organismsDiffer>false</organismsDiffer>
    <experiments>2</experiments>
</comment>
<comment type="interaction">
    <interactant intactId="EBI-1254761">
        <id>O95382</id>
    </interactant>
    <interactant intactId="EBI-356498">
        <id>P62258</id>
        <label>YWHAE</label>
    </interactant>
    <organismsDiffer>false</organismsDiffer>
    <experiments>2</experiments>
</comment>
<comment type="interaction">
    <interactant intactId="EBI-1254761">
        <id>O95382</id>
    </interactant>
    <interactant intactId="EBI-359832">
        <id>P61981</id>
        <label>YWHAG</label>
    </interactant>
    <organismsDiffer>false</organismsDiffer>
    <experiments>3</experiments>
</comment>
<comment type="alternative products">
    <event type="alternative splicing"/>
    <isoform>
        <id>O95382-1</id>
        <name>1</name>
        <sequence type="displayed"/>
    </isoform>
    <isoform>
        <id>O95382-2</id>
        <name>2</name>
        <sequence type="described" ref="VSP_026201 VSP_026203 VSP_026204"/>
    </isoform>
    <isoform>
        <id>O95382-3</id>
        <name>3</name>
        <sequence type="described" ref="VSP_026202"/>
    </isoform>
</comment>
<comment type="similarity">
    <text evidence="15">Belongs to the protein kinase superfamily. STE Ser/Thr protein kinase family. MAP kinase kinase kinase subfamily.</text>
</comment>
<comment type="sequence caution" evidence="15">
    <conflict type="erroneous initiation">
        <sequence resource="EMBL-CDS" id="AAD05304"/>
    </conflict>
</comment>
<organism>
    <name type="scientific">Homo sapiens</name>
    <name type="common">Human</name>
    <dbReference type="NCBI Taxonomy" id="9606"/>
    <lineage>
        <taxon>Eukaryota</taxon>
        <taxon>Metazoa</taxon>
        <taxon>Chordata</taxon>
        <taxon>Craniata</taxon>
        <taxon>Vertebrata</taxon>
        <taxon>Euteleostomi</taxon>
        <taxon>Mammalia</taxon>
        <taxon>Eutheria</taxon>
        <taxon>Euarchontoglires</taxon>
        <taxon>Primates</taxon>
        <taxon>Haplorrhini</taxon>
        <taxon>Catarrhini</taxon>
        <taxon>Hominidae</taxon>
        <taxon>Homo</taxon>
    </lineage>
</organism>
<sequence>MAGPCPRSGAERAGSCWQDPLAVALSRGRQLAAPPGRGCARSRPLSVVYVLTREPQPGLEPREGTEAEPLPLRCLREACAQVPRPRPPPQLRSLPFGTLELGDTAALDAFYNADVVVLEVSSSLVQPSLFYHLGVRESFSMTNNVLLCSQADLPDLQALREDVFQKNSDCVGSYTLIPYVVTATGRVLCGDAGLLRGLADGLVQAGVGTEALLTPLVGRLARLLEATPTDSCGYFRETIRRDIRQARERFSGPQLRQELARLQRRLDSVELLSPDIIMNLLLSYRDVQDYSAIIELVETLQALPTCDVAEQHNVCFHYTFALNRRNRPGDRAKALSVLLPLVQLEGSVAPDLYCMCGRIYKDMFFSSGFQDAGHREQAYHWYRKAFDVEPSLHSGINAAVLLIAAGQHFEDSKELRLIGMKLGCLLARKGCVEKMQYYWDVGFYLGAQILANDPTQVVLAAEQLYKLNAPIWYLVSVMETFLLYQHFRPTPEPPGGPPRRAHFWLHFLLQSCQPFKTACAQGDQCLVLVLEMNKVLLPAKLEVRGTDPVSTVTLSLLEPETQDIPSSWTFPVASICGVSASKRDERCCFLYALPPAQDVQLCFPSVGHCQWFCGLIQAWVTNPDSTAPAEEAEGAGEMLEFDYEYTETGERLVLGKGTYGVVYAGRDRHTRVRIAIKEIPERDSRFSQPLHEEIALHRRLRHKNIVRYLGSASQGGYLKIFMEEVPGGSLSSLLRSVWGPLKDNESTISFYTRQILQGLGYLHDNHIVHRDIKGDNVLINTFSGLLKISDFGTSKRLAGITPCTETFTGTLQYMAPEIIDQGPRGYGKAADIWSLGCTVIEMATGRPPFHELGSPQAAMFQVGMYKVHPPMPSSLSAEAQAFLLRTFEPDPRLRASAQTLLGDPFLQPGKRSRSPSSPRHAPRPSDAPSASPTPSANSTTQSQTFPCPQAPSQHPPSPPKRCLSYGGTSQLRVPEEPAAEEPASPEESSGLSLLHQESKRRAMLAAVLEQELPALAENLHQEQKQEQGARLGRNHVEELLRCLGAHIHTPNRRQLAQELRALQGRLRAQGLGPALLHRPLFAFPDAVKQILRKRQIRPHWMFVLDSLLSRAVRAALGVLGPEVEKEAVSPRSEELSNEGDSQQSPGQQSPLPVEPEQGPAPLMVQLSLLRAETDRLREILAGKEREYQALVQRALQRLNEEARTYVLAPEPPTALSTDQGLVQWLQELNVDSGTIQMLLNHSFTLHTLLTYATRDDLIYTRIRGGMVCRIWRAILAQRAGSTPVTSGP</sequence>
<evidence type="ECO:0000250" key="1"/>
<evidence type="ECO:0000250" key="2">
    <source>
        <dbReference type="UniProtKB" id="Q9WTR2"/>
    </source>
</evidence>
<evidence type="ECO:0000255" key="3"/>
<evidence type="ECO:0000255" key="4">
    <source>
        <dbReference type="PROSITE-ProRule" id="PRU00159"/>
    </source>
</evidence>
<evidence type="ECO:0000255" key="5">
    <source>
        <dbReference type="PROSITE-ProRule" id="PRU10027"/>
    </source>
</evidence>
<evidence type="ECO:0000256" key="6">
    <source>
        <dbReference type="SAM" id="MobiDB-lite"/>
    </source>
</evidence>
<evidence type="ECO:0000269" key="7">
    <source>
    </source>
</evidence>
<evidence type="ECO:0000269" key="8">
    <source>
    </source>
</evidence>
<evidence type="ECO:0000269" key="9">
    <source>
    </source>
</evidence>
<evidence type="ECO:0000269" key="10">
    <source>
    </source>
</evidence>
<evidence type="ECO:0000269" key="11">
    <source>
    </source>
</evidence>
<evidence type="ECO:0000269" key="12">
    <source ref="4"/>
</evidence>
<evidence type="ECO:0000303" key="13">
    <source>
    </source>
</evidence>
<evidence type="ECO:0000303" key="14">
    <source ref="4"/>
</evidence>
<evidence type="ECO:0000305" key="15"/>
<evidence type="ECO:0007744" key="16">
    <source>
    </source>
</evidence>
<evidence type="ECO:0007744" key="17">
    <source>
    </source>
</evidence>
<evidence type="ECO:0007744" key="18">
    <source>
    </source>
</evidence>
<evidence type="ECO:0007744" key="19">
    <source>
    </source>
</evidence>
<protein>
    <recommendedName>
        <fullName>Mitogen-activated protein kinase kinase kinase 6</fullName>
        <ecNumber>2.7.11.25</ecNumber>
    </recommendedName>
    <alternativeName>
        <fullName>Apoptosis signal-regulating kinase 2</fullName>
    </alternativeName>
</protein>
<dbReference type="EC" id="2.7.11.25"/>
<dbReference type="EMBL" id="AB167411">
    <property type="protein sequence ID" value="BAD12485.1"/>
    <property type="molecule type" value="mRNA"/>
</dbReference>
<dbReference type="EMBL" id="FO393419">
    <property type="status" value="NOT_ANNOTATED_CDS"/>
    <property type="molecule type" value="Genomic_DNA"/>
</dbReference>
<dbReference type="EMBL" id="BC015914">
    <property type="protein sequence ID" value="AAH15914.1"/>
    <property type="molecule type" value="mRNA"/>
</dbReference>
<dbReference type="EMBL" id="BC129950">
    <property type="protein sequence ID" value="AAI29951.1"/>
    <property type="molecule type" value="mRNA"/>
</dbReference>
<dbReference type="EMBL" id="BC129951">
    <property type="protein sequence ID" value="AAI29952.1"/>
    <property type="molecule type" value="mRNA"/>
</dbReference>
<dbReference type="EMBL" id="AB208805">
    <property type="protein sequence ID" value="BAD92042.1"/>
    <property type="molecule type" value="mRNA"/>
</dbReference>
<dbReference type="EMBL" id="AF100318">
    <property type="protein sequence ID" value="AAD05304.1"/>
    <property type="status" value="ALT_INIT"/>
    <property type="molecule type" value="mRNA"/>
</dbReference>
<dbReference type="CCDS" id="CCDS299.1">
    <molecule id="O95382-1"/>
</dbReference>
<dbReference type="CCDS" id="CCDS72738.1">
    <molecule id="O95382-3"/>
</dbReference>
<dbReference type="RefSeq" id="NP_001284538.1">
    <molecule id="O95382-3"/>
    <property type="nucleotide sequence ID" value="NM_001297609.2"/>
</dbReference>
<dbReference type="RefSeq" id="NP_004663.3">
    <molecule id="O95382-1"/>
    <property type="nucleotide sequence ID" value="NM_004672.4"/>
</dbReference>
<dbReference type="SMR" id="O95382"/>
<dbReference type="BioGRID" id="114524">
    <property type="interactions" value="62"/>
</dbReference>
<dbReference type="FunCoup" id="O95382">
    <property type="interactions" value="457"/>
</dbReference>
<dbReference type="IntAct" id="O95382">
    <property type="interactions" value="45"/>
</dbReference>
<dbReference type="MINT" id="O95382"/>
<dbReference type="STRING" id="9606.ENSP00000350195"/>
<dbReference type="BindingDB" id="O95382"/>
<dbReference type="ChEMBL" id="CHEMBL1163123"/>
<dbReference type="DrugBank" id="DB12010">
    <property type="generic name" value="Fostamatinib"/>
</dbReference>
<dbReference type="DrugCentral" id="O95382"/>
<dbReference type="GuidetoPHARMACOLOGY" id="2081"/>
<dbReference type="GlyCosmos" id="O95382">
    <property type="glycosylation" value="1 site, 1 glycan"/>
</dbReference>
<dbReference type="GlyGen" id="O95382">
    <property type="glycosylation" value="2 sites, 1 O-linked glycan (1 site)"/>
</dbReference>
<dbReference type="iPTMnet" id="O95382"/>
<dbReference type="PhosphoSitePlus" id="O95382"/>
<dbReference type="BioMuta" id="MAP3K6"/>
<dbReference type="CPTAC" id="CPTAC-851"/>
<dbReference type="CPTAC" id="CPTAC-852"/>
<dbReference type="jPOST" id="O95382"/>
<dbReference type="MassIVE" id="O95382"/>
<dbReference type="PaxDb" id="9606-ENSP00000419591"/>
<dbReference type="PeptideAtlas" id="O95382"/>
<dbReference type="ProteomicsDB" id="50834">
    <molecule id="O95382-1"/>
</dbReference>
<dbReference type="ProteomicsDB" id="50835">
    <molecule id="O95382-2"/>
</dbReference>
<dbReference type="ProteomicsDB" id="50836">
    <molecule id="O95382-3"/>
</dbReference>
<dbReference type="Pumba" id="O95382"/>
<dbReference type="Antibodypedia" id="30762">
    <property type="antibodies" value="209 antibodies from 28 providers"/>
</dbReference>
<dbReference type="DNASU" id="9064"/>
<dbReference type="Ensembl" id="ENST00000357582.3">
    <molecule id="O95382-1"/>
    <property type="protein sequence ID" value="ENSP00000350195.2"/>
    <property type="gene ID" value="ENSG00000142733.18"/>
</dbReference>
<dbReference type="Ensembl" id="ENST00000374040.7">
    <molecule id="O95382-3"/>
    <property type="protein sequence ID" value="ENSP00000363152.2"/>
    <property type="gene ID" value="ENSG00000142733.18"/>
</dbReference>
<dbReference type="GeneID" id="9064"/>
<dbReference type="KEGG" id="hsa:9064"/>
<dbReference type="MANE-Select" id="ENST00000357582.3">
    <property type="protein sequence ID" value="ENSP00000350195.2"/>
    <property type="RefSeq nucleotide sequence ID" value="NM_004672.5"/>
    <property type="RefSeq protein sequence ID" value="NP_004663.3"/>
</dbReference>
<dbReference type="UCSC" id="uc001bny.2">
    <molecule id="O95382-1"/>
    <property type="organism name" value="human"/>
</dbReference>
<dbReference type="AGR" id="HGNC:6858"/>
<dbReference type="CTD" id="9064"/>
<dbReference type="DisGeNET" id="9064"/>
<dbReference type="GeneCards" id="MAP3K6"/>
<dbReference type="HGNC" id="HGNC:6858">
    <property type="gene designation" value="MAP3K6"/>
</dbReference>
<dbReference type="HPA" id="ENSG00000142733">
    <property type="expression patterns" value="Low tissue specificity"/>
</dbReference>
<dbReference type="MalaCards" id="MAP3K6"/>
<dbReference type="MIM" id="604468">
    <property type="type" value="gene"/>
</dbReference>
<dbReference type="neXtProt" id="NX_O95382"/>
<dbReference type="OpenTargets" id="ENSG00000142733"/>
<dbReference type="Orphanet" id="26106">
    <property type="disease" value="Hereditary diffuse gastric cancer"/>
</dbReference>
<dbReference type="PharmGKB" id="PA30602"/>
<dbReference type="VEuPathDB" id="HostDB:ENSG00000142733"/>
<dbReference type="eggNOG" id="KOG4279">
    <property type="taxonomic scope" value="Eukaryota"/>
</dbReference>
<dbReference type="GeneTree" id="ENSGT00940000159398"/>
<dbReference type="HOGENOM" id="CLU_003687_3_0_1"/>
<dbReference type="InParanoid" id="O95382"/>
<dbReference type="OMA" id="SCQPFKP"/>
<dbReference type="OrthoDB" id="275301at2759"/>
<dbReference type="PAN-GO" id="O95382">
    <property type="GO annotations" value="2 GO annotations based on evolutionary models"/>
</dbReference>
<dbReference type="PhylomeDB" id="O95382"/>
<dbReference type="TreeFam" id="TF105115"/>
<dbReference type="BRENDA" id="2.7.11.25">
    <property type="organism ID" value="2681"/>
</dbReference>
<dbReference type="PathwayCommons" id="O95382"/>
<dbReference type="SignaLink" id="O95382"/>
<dbReference type="SIGNOR" id="O95382"/>
<dbReference type="BioGRID-ORCS" id="9064">
    <property type="hits" value="13 hits in 1188 CRISPR screens"/>
</dbReference>
<dbReference type="ChiTaRS" id="MAP3K6">
    <property type="organism name" value="human"/>
</dbReference>
<dbReference type="GenomeRNAi" id="9064"/>
<dbReference type="Pharos" id="O95382">
    <property type="development level" value="Tchem"/>
</dbReference>
<dbReference type="PRO" id="PR:O95382"/>
<dbReference type="Proteomes" id="UP000005640">
    <property type="component" value="Chromosome 1"/>
</dbReference>
<dbReference type="RNAct" id="O95382">
    <property type="molecule type" value="protein"/>
</dbReference>
<dbReference type="Bgee" id="ENSG00000142733">
    <property type="expression patterns" value="Expressed in lower esophagus mucosa and 145 other cell types or tissues"/>
</dbReference>
<dbReference type="ExpressionAtlas" id="O95382">
    <property type="expression patterns" value="baseline and differential"/>
</dbReference>
<dbReference type="GO" id="GO:0005524">
    <property type="term" value="F:ATP binding"/>
    <property type="evidence" value="ECO:0000314"/>
    <property type="project" value="UniProtKB"/>
</dbReference>
<dbReference type="GO" id="GO:0000287">
    <property type="term" value="F:magnesium ion binding"/>
    <property type="evidence" value="ECO:0000314"/>
    <property type="project" value="UniProtKB"/>
</dbReference>
<dbReference type="GO" id="GO:0004709">
    <property type="term" value="F:MAP kinase kinase kinase activity"/>
    <property type="evidence" value="ECO:0000314"/>
    <property type="project" value="UniProtKB"/>
</dbReference>
<dbReference type="GO" id="GO:0106310">
    <property type="term" value="F:protein serine kinase activity"/>
    <property type="evidence" value="ECO:0007669"/>
    <property type="project" value="RHEA"/>
</dbReference>
<dbReference type="GO" id="GO:0007254">
    <property type="term" value="P:JNK cascade"/>
    <property type="evidence" value="ECO:0000318"/>
    <property type="project" value="GO_Central"/>
</dbReference>
<dbReference type="GO" id="GO:0038066">
    <property type="term" value="P:p38MAPK cascade"/>
    <property type="evidence" value="ECO:0000318"/>
    <property type="project" value="GO_Central"/>
</dbReference>
<dbReference type="GO" id="GO:0006468">
    <property type="term" value="P:protein phosphorylation"/>
    <property type="evidence" value="ECO:0000314"/>
    <property type="project" value="UniProtKB"/>
</dbReference>
<dbReference type="GO" id="GO:0007165">
    <property type="term" value="P:signal transduction"/>
    <property type="evidence" value="ECO:0000304"/>
    <property type="project" value="ProtInc"/>
</dbReference>
<dbReference type="CDD" id="cd06624">
    <property type="entry name" value="STKc_ASK"/>
    <property type="match status" value="1"/>
</dbReference>
<dbReference type="FunFam" id="1.10.510.10:FF:000054">
    <property type="entry name" value="Mitogen-activated protein kinase kinase kinase 5"/>
    <property type="match status" value="1"/>
</dbReference>
<dbReference type="FunFam" id="3.30.200.20:FF:000067">
    <property type="entry name" value="Mitogen-activated protein kinase kinase kinase 5"/>
    <property type="match status" value="1"/>
</dbReference>
<dbReference type="Gene3D" id="3.30.200.20">
    <property type="entry name" value="Phosphorylase Kinase, domain 1"/>
    <property type="match status" value="1"/>
</dbReference>
<dbReference type="Gene3D" id="1.10.510.10">
    <property type="entry name" value="Transferase(Phosphotransferase) domain 1"/>
    <property type="match status" value="1"/>
</dbReference>
<dbReference type="InterPro" id="IPR046872">
    <property type="entry name" value="DRHyd-ASK"/>
</dbReference>
<dbReference type="InterPro" id="IPR046873">
    <property type="entry name" value="HisK-N-like"/>
</dbReference>
<dbReference type="InterPro" id="IPR011009">
    <property type="entry name" value="Kinase-like_dom_sf"/>
</dbReference>
<dbReference type="InterPro" id="IPR043969">
    <property type="entry name" value="MAP3K_PH"/>
</dbReference>
<dbReference type="InterPro" id="IPR025136">
    <property type="entry name" value="MAP3K_TRAF-bd"/>
</dbReference>
<dbReference type="InterPro" id="IPR000719">
    <property type="entry name" value="Prot_kinase_dom"/>
</dbReference>
<dbReference type="InterPro" id="IPR017441">
    <property type="entry name" value="Protein_kinase_ATP_BS"/>
</dbReference>
<dbReference type="InterPro" id="IPR013761">
    <property type="entry name" value="SAM/pointed_sf"/>
</dbReference>
<dbReference type="InterPro" id="IPR008271">
    <property type="entry name" value="Ser/Thr_kinase_AS"/>
</dbReference>
<dbReference type="PANTHER" id="PTHR11584:SF391">
    <property type="entry name" value="MITOGEN-ACTIVATED PROTEIN KINASE KINASE KINASE 6"/>
    <property type="match status" value="1"/>
</dbReference>
<dbReference type="PANTHER" id="PTHR11584">
    <property type="entry name" value="SERINE/THREONINE PROTEIN KINASE"/>
    <property type="match status" value="1"/>
</dbReference>
<dbReference type="Pfam" id="PF19039">
    <property type="entry name" value="ASK_PH"/>
    <property type="match status" value="1"/>
</dbReference>
<dbReference type="Pfam" id="PF20309">
    <property type="entry name" value="DRHyd-ASK"/>
    <property type="match status" value="1"/>
</dbReference>
<dbReference type="Pfam" id="PF20302">
    <property type="entry name" value="HisK-N-like"/>
    <property type="match status" value="1"/>
</dbReference>
<dbReference type="Pfam" id="PF13281">
    <property type="entry name" value="MAP3K_TRAF_bd"/>
    <property type="match status" value="1"/>
</dbReference>
<dbReference type="Pfam" id="PF00069">
    <property type="entry name" value="Pkinase"/>
    <property type="match status" value="1"/>
</dbReference>
<dbReference type="SMART" id="SM00220">
    <property type="entry name" value="S_TKc"/>
    <property type="match status" value="1"/>
</dbReference>
<dbReference type="SUPFAM" id="SSF56112">
    <property type="entry name" value="Protein kinase-like (PK-like)"/>
    <property type="match status" value="1"/>
</dbReference>
<dbReference type="SUPFAM" id="SSF47769">
    <property type="entry name" value="SAM/Pointed domain"/>
    <property type="match status" value="1"/>
</dbReference>
<dbReference type="PROSITE" id="PS00107">
    <property type="entry name" value="PROTEIN_KINASE_ATP"/>
    <property type="match status" value="1"/>
</dbReference>
<dbReference type="PROSITE" id="PS50011">
    <property type="entry name" value="PROTEIN_KINASE_DOM"/>
    <property type="match status" value="1"/>
</dbReference>
<dbReference type="PROSITE" id="PS00108">
    <property type="entry name" value="PROTEIN_KINASE_ST"/>
    <property type="match status" value="1"/>
</dbReference>
<feature type="chain" id="PRO_0000086251" description="Mitogen-activated protein kinase kinase kinase 6">
    <location>
        <begin position="1"/>
        <end position="1288"/>
    </location>
</feature>
<feature type="domain" description="Protein kinase" evidence="4">
    <location>
        <begin position="648"/>
        <end position="906"/>
    </location>
</feature>
<feature type="region of interest" description="Disordered" evidence="6">
    <location>
        <begin position="899"/>
        <end position="997"/>
    </location>
</feature>
<feature type="region of interest" description="Disordered" evidence="6">
    <location>
        <begin position="1123"/>
        <end position="1157"/>
    </location>
</feature>
<feature type="coiled-coil region" evidence="3">
    <location>
        <begin position="1004"/>
        <end position="1029"/>
    </location>
</feature>
<feature type="coiled-coil region" evidence="3">
    <location>
        <begin position="1166"/>
        <end position="1205"/>
    </location>
</feature>
<feature type="compositionally biased region" description="Low complexity" evidence="6">
    <location>
        <begin position="914"/>
        <end position="952"/>
    </location>
</feature>
<feature type="compositionally biased region" description="Low complexity" evidence="6">
    <location>
        <begin position="980"/>
        <end position="989"/>
    </location>
</feature>
<feature type="compositionally biased region" description="Basic and acidic residues" evidence="6">
    <location>
        <begin position="1123"/>
        <end position="1134"/>
    </location>
</feature>
<feature type="compositionally biased region" description="Low complexity" evidence="6">
    <location>
        <begin position="1141"/>
        <end position="1151"/>
    </location>
</feature>
<feature type="active site" description="Proton acceptor" evidence="4 5">
    <location>
        <position position="771"/>
    </location>
</feature>
<feature type="binding site" evidence="4">
    <location>
        <begin position="654"/>
        <end position="662"/>
    </location>
    <ligand>
        <name>ATP</name>
        <dbReference type="ChEBI" id="CHEBI:30616"/>
    </ligand>
</feature>
<feature type="binding site" evidence="4">
    <location>
        <position position="677"/>
    </location>
    <ligand>
        <name>ATP</name>
        <dbReference type="ChEBI" id="CHEBI:30616"/>
    </ligand>
</feature>
<feature type="modified residue" description="Phosphothreonine" evidence="2">
    <location>
        <position position="806"/>
    </location>
</feature>
<feature type="modified residue" description="Phosphoserine" evidence="19">
    <location>
        <position position="964"/>
    </location>
</feature>
<feature type="modified residue" description="Phosphoserine" evidence="16 17 18 19">
    <location>
        <position position="984"/>
    </location>
</feature>
<feature type="modified residue" description="Phosphoserine" evidence="17 18 19">
    <location>
        <position position="1129"/>
    </location>
</feature>
<feature type="modified residue" description="Phosphoserine" evidence="18">
    <location>
        <position position="1149"/>
    </location>
</feature>
<feature type="splice variant" id="VSP_026201" description="In isoform 2." evidence="13">
    <location>
        <begin position="1"/>
        <end position="277"/>
    </location>
</feature>
<feature type="splice variant" id="VSP_026202" description="In isoform 3." evidence="14">
    <location>
        <begin position="161"/>
        <end position="168"/>
    </location>
</feature>
<feature type="splice variant" id="VSP_026203" description="In isoform 2." evidence="13">
    <original>RLRAQGLGPA</original>
    <variation>WMNGEDKGSF</variation>
    <location>
        <begin position="1065"/>
        <end position="1074"/>
    </location>
</feature>
<feature type="splice variant" id="VSP_026204" description="In isoform 2." evidence="13">
    <location>
        <begin position="1075"/>
        <end position="1288"/>
    </location>
</feature>
<feature type="sequence variant" id="VAR_032832" description="In dbSNP:rs1138294." evidence="7 9">
    <original>T</original>
    <variation>I</variation>
    <location>
        <position position="455"/>
    </location>
</feature>
<feature type="sequence variant" id="VAR_046050" description="In dbSNP:rs11247641.">
    <original>R</original>
    <variation>C</variation>
    <location>
        <position position="499"/>
    </location>
</feature>
<feature type="sequence variant" id="VAR_046051" description="In dbSNP:rs55671988." evidence="10">
    <original>R</original>
    <variation>W</variation>
    <location>
        <position position="544"/>
    </location>
</feature>
<feature type="sequence variant" id="VAR_032833" description="In dbSNP:rs35659744." evidence="10 12">
    <original>N</original>
    <variation>K</variation>
    <location>
        <position position="622"/>
    </location>
</feature>
<feature type="sequence variant" id="VAR_046052" description="In dbSNP:rs55869163." evidence="10">
    <original>R</original>
    <variation>G</variation>
    <location>
        <position position="668"/>
    </location>
</feature>
<feature type="sequence variant" id="VAR_046053" description="In dbSNP:rs56359841." evidence="10">
    <original>R</original>
    <variation>L</variation>
    <location>
        <position position="673"/>
    </location>
</feature>
<feature type="sequence variant" id="VAR_035629" description="In a breast cancer sample; somatic mutation." evidence="8">
    <original>P</original>
    <variation>T</variation>
    <location>
        <position position="869"/>
    </location>
</feature>
<feature type="sequence variant" id="VAR_046054" description="In a breast pleomorphic lobular carcinoma sample; somatic mutation." evidence="10">
    <original>S</original>
    <variation>L</variation>
    <location>
        <position position="925"/>
    </location>
</feature>
<feature type="sequence variant" id="VAR_046055" description="In an ovarian endometrioid cancer sample; somatic mutation." evidence="10">
    <original>T</original>
    <variation>I</variation>
    <location>
        <position position="968"/>
    </location>
</feature>
<feature type="sequence variant" id="VAR_032834" description="In dbSNP:rs17856498." evidence="7">
    <original>S</original>
    <variation>N</variation>
    <location>
        <position position="969"/>
    </location>
</feature>
<feature type="sequence variant" id="VAR_046056" description="In dbSNP:rs55990440." evidence="10">
    <original>A</original>
    <variation>T</variation>
    <location>
        <position position="1061"/>
    </location>
</feature>
<feature type="sequence variant" id="VAR_046057" description="In dbSNP:rs17162549.">
    <original>G</original>
    <variation>A</variation>
    <location>
        <position position="1233"/>
    </location>
</feature>
<feature type="sequence conflict" description="In Ref. 3; AAI29952." evidence="15" ref="3">
    <original>MQYYWD</original>
    <variation>ALWVPV</variation>
    <location>
        <begin position="435"/>
        <end position="440"/>
    </location>
</feature>
<feature type="sequence conflict" description="In Ref. 3; AAI29951." evidence="15" ref="3">
    <original>MQYYWD</original>
    <variation>HTWVPV</variation>
    <location>
        <begin position="435"/>
        <end position="440"/>
    </location>
</feature>
<reference key="1">
    <citation type="journal article" date="2007" name="J. Biol. Chem.">
        <title>Apoptosis signal-regulating kinase (ASK) 2 functions as a mitogen-activated protein kinase kinase kinase in a heteromeric complex with ASK1.</title>
        <authorList>
            <person name="Takeda K."/>
            <person name="Shimozono R."/>
            <person name="Noguchi T."/>
            <person name="Umeda T."/>
            <person name="Morimoto Y."/>
            <person name="Naguro I."/>
            <person name="Tobiume K."/>
            <person name="Saitoh M."/>
            <person name="Matsuzawa A."/>
            <person name="Ichijo H."/>
        </authorList>
    </citation>
    <scope>NUCLEOTIDE SEQUENCE [MRNA] (ISOFORM 1)</scope>
    <scope>FUNCTION</scope>
    <scope>ACTIVITY REGULATION</scope>
    <scope>INTERACTION WITH MAP3K5</scope>
    <scope>VARIANT ILE-455</scope>
</reference>
<reference key="2">
    <citation type="journal article" date="2006" name="Nature">
        <title>The DNA sequence and biological annotation of human chromosome 1.</title>
        <authorList>
            <person name="Gregory S.G."/>
            <person name="Barlow K.F."/>
            <person name="McLay K.E."/>
            <person name="Kaul R."/>
            <person name="Swarbreck D."/>
            <person name="Dunham A."/>
            <person name="Scott C.E."/>
            <person name="Howe K.L."/>
            <person name="Woodfine K."/>
            <person name="Spencer C.C.A."/>
            <person name="Jones M.C."/>
            <person name="Gillson C."/>
            <person name="Searle S."/>
            <person name="Zhou Y."/>
            <person name="Kokocinski F."/>
            <person name="McDonald L."/>
            <person name="Evans R."/>
            <person name="Phillips K."/>
            <person name="Atkinson A."/>
            <person name="Cooper R."/>
            <person name="Jones C."/>
            <person name="Hall R.E."/>
            <person name="Andrews T.D."/>
            <person name="Lloyd C."/>
            <person name="Ainscough R."/>
            <person name="Almeida J.P."/>
            <person name="Ambrose K.D."/>
            <person name="Anderson F."/>
            <person name="Andrew R.W."/>
            <person name="Ashwell R.I.S."/>
            <person name="Aubin K."/>
            <person name="Babbage A.K."/>
            <person name="Bagguley C.L."/>
            <person name="Bailey J."/>
            <person name="Beasley H."/>
            <person name="Bethel G."/>
            <person name="Bird C.P."/>
            <person name="Bray-Allen S."/>
            <person name="Brown J.Y."/>
            <person name="Brown A.J."/>
            <person name="Buckley D."/>
            <person name="Burton J."/>
            <person name="Bye J."/>
            <person name="Carder C."/>
            <person name="Chapman J.C."/>
            <person name="Clark S.Y."/>
            <person name="Clarke G."/>
            <person name="Clee C."/>
            <person name="Cobley V."/>
            <person name="Collier R.E."/>
            <person name="Corby N."/>
            <person name="Coville G.J."/>
            <person name="Davies J."/>
            <person name="Deadman R."/>
            <person name="Dunn M."/>
            <person name="Earthrowl M."/>
            <person name="Ellington A.G."/>
            <person name="Errington H."/>
            <person name="Frankish A."/>
            <person name="Frankland J."/>
            <person name="French L."/>
            <person name="Garner P."/>
            <person name="Garnett J."/>
            <person name="Gay L."/>
            <person name="Ghori M.R.J."/>
            <person name="Gibson R."/>
            <person name="Gilby L.M."/>
            <person name="Gillett W."/>
            <person name="Glithero R.J."/>
            <person name="Grafham D.V."/>
            <person name="Griffiths C."/>
            <person name="Griffiths-Jones S."/>
            <person name="Grocock R."/>
            <person name="Hammond S."/>
            <person name="Harrison E.S.I."/>
            <person name="Hart E."/>
            <person name="Haugen E."/>
            <person name="Heath P.D."/>
            <person name="Holmes S."/>
            <person name="Holt K."/>
            <person name="Howden P.J."/>
            <person name="Hunt A.R."/>
            <person name="Hunt S.E."/>
            <person name="Hunter G."/>
            <person name="Isherwood J."/>
            <person name="James R."/>
            <person name="Johnson C."/>
            <person name="Johnson D."/>
            <person name="Joy A."/>
            <person name="Kay M."/>
            <person name="Kershaw J.K."/>
            <person name="Kibukawa M."/>
            <person name="Kimberley A.M."/>
            <person name="King A."/>
            <person name="Knights A.J."/>
            <person name="Lad H."/>
            <person name="Laird G."/>
            <person name="Lawlor S."/>
            <person name="Leongamornlert D.A."/>
            <person name="Lloyd D.M."/>
            <person name="Loveland J."/>
            <person name="Lovell J."/>
            <person name="Lush M.J."/>
            <person name="Lyne R."/>
            <person name="Martin S."/>
            <person name="Mashreghi-Mohammadi M."/>
            <person name="Matthews L."/>
            <person name="Matthews N.S.W."/>
            <person name="McLaren S."/>
            <person name="Milne S."/>
            <person name="Mistry S."/>
            <person name="Moore M.J.F."/>
            <person name="Nickerson T."/>
            <person name="O'Dell C.N."/>
            <person name="Oliver K."/>
            <person name="Palmeiri A."/>
            <person name="Palmer S.A."/>
            <person name="Parker A."/>
            <person name="Patel D."/>
            <person name="Pearce A.V."/>
            <person name="Peck A.I."/>
            <person name="Pelan S."/>
            <person name="Phelps K."/>
            <person name="Phillimore B.J."/>
            <person name="Plumb R."/>
            <person name="Rajan J."/>
            <person name="Raymond C."/>
            <person name="Rouse G."/>
            <person name="Saenphimmachak C."/>
            <person name="Sehra H.K."/>
            <person name="Sheridan E."/>
            <person name="Shownkeen R."/>
            <person name="Sims S."/>
            <person name="Skuce C.D."/>
            <person name="Smith M."/>
            <person name="Steward C."/>
            <person name="Subramanian S."/>
            <person name="Sycamore N."/>
            <person name="Tracey A."/>
            <person name="Tromans A."/>
            <person name="Van Helmond Z."/>
            <person name="Wall M."/>
            <person name="Wallis J.M."/>
            <person name="White S."/>
            <person name="Whitehead S.L."/>
            <person name="Wilkinson J.E."/>
            <person name="Willey D.L."/>
            <person name="Williams H."/>
            <person name="Wilming L."/>
            <person name="Wray P.W."/>
            <person name="Wu Z."/>
            <person name="Coulson A."/>
            <person name="Vaudin M."/>
            <person name="Sulston J.E."/>
            <person name="Durbin R.M."/>
            <person name="Hubbard T."/>
            <person name="Wooster R."/>
            <person name="Dunham I."/>
            <person name="Carter N.P."/>
            <person name="McVean G."/>
            <person name="Ross M.T."/>
            <person name="Harrow J."/>
            <person name="Olson M.V."/>
            <person name="Beck S."/>
            <person name="Rogers J."/>
            <person name="Bentley D.R."/>
        </authorList>
    </citation>
    <scope>NUCLEOTIDE SEQUENCE [LARGE SCALE GENOMIC DNA]</scope>
</reference>
<reference key="3">
    <citation type="journal article" date="2004" name="Genome Res.">
        <title>The status, quality, and expansion of the NIH full-length cDNA project: the Mammalian Gene Collection (MGC).</title>
        <authorList>
            <consortium name="The MGC Project Team"/>
        </authorList>
    </citation>
    <scope>NUCLEOTIDE SEQUENCE [LARGE SCALE MRNA] (ISOFORM 2)</scope>
    <scope>NUCLEOTIDE SEQUENCE [LARGE SCALE MRNA] OF 435-1288 (ISOFORMS 1/3)</scope>
    <scope>VARIANTS ILE-455 AND ASN-969</scope>
    <source>
        <tissue>Skin</tissue>
    </source>
</reference>
<reference key="4">
    <citation type="submission" date="2005-03" db="EMBL/GenBank/DDBJ databases">
        <authorList>
            <person name="Totoki Y."/>
            <person name="Toyoda A."/>
            <person name="Takeda T."/>
            <person name="Sakaki Y."/>
            <person name="Tanaka A."/>
            <person name="Yokoyama S."/>
            <person name="Ohara O."/>
            <person name="Nagase T."/>
            <person name="Kikuno R.F."/>
        </authorList>
    </citation>
    <scope>NUCLEOTIDE SEQUENCE [LARGE SCALE MRNA] OF 89-1288 (ISOFORM 3)</scope>
    <scope>VARIANT LYS-622</scope>
    <source>
        <tissue>Brain</tissue>
    </source>
</reference>
<reference key="5">
    <citation type="journal article" date="1998" name="Biochem. Biophys. Res. Commun.">
        <title>MAPKKK6, a novel mitogen-activated protein kinase kinase kinase, that associates with MAPKKK5.</title>
        <authorList>
            <person name="Wang X.S."/>
            <person name="Diener K."/>
            <person name="Tan T.-H."/>
            <person name="Yao Z."/>
        </authorList>
    </citation>
    <scope>NUCLEOTIDE SEQUENCE [MRNA] OF 197-1288</scope>
    <scope>FUNCTION</scope>
    <scope>TISSUE SPECIFICITY</scope>
    <scope>INTERACTION WITH MAP3K5</scope>
</reference>
<reference key="6">
    <citation type="journal article" date="2008" name="Mol. Cell">
        <title>Kinase-selective enrichment enables quantitative phosphoproteomics of the kinome across the cell cycle.</title>
        <authorList>
            <person name="Daub H."/>
            <person name="Olsen J.V."/>
            <person name="Bairlein M."/>
            <person name="Gnad F."/>
            <person name="Oppermann F.S."/>
            <person name="Korner R."/>
            <person name="Greff Z."/>
            <person name="Keri G."/>
            <person name="Stemmann O."/>
            <person name="Mann M."/>
        </authorList>
    </citation>
    <scope>PHOSPHORYLATION [LARGE SCALE ANALYSIS] AT SER-984 AND SER-1129</scope>
    <scope>IDENTIFICATION BY MASS SPECTROMETRY [LARGE SCALE ANALYSIS]</scope>
    <source>
        <tissue>Cervix carcinoma</tissue>
    </source>
</reference>
<reference key="7">
    <citation type="journal article" date="2008" name="Proc. Natl. Acad. Sci. U.S.A.">
        <title>A quantitative atlas of mitotic phosphorylation.</title>
        <authorList>
            <person name="Dephoure N."/>
            <person name="Zhou C."/>
            <person name="Villen J."/>
            <person name="Beausoleil S.A."/>
            <person name="Bakalarski C.E."/>
            <person name="Elledge S.J."/>
            <person name="Gygi S.P."/>
        </authorList>
    </citation>
    <scope>PHOSPHORYLATION [LARGE SCALE ANALYSIS] AT SER-984</scope>
    <scope>IDENTIFICATION BY MASS SPECTROMETRY [LARGE SCALE ANALYSIS]</scope>
    <source>
        <tissue>Cervix carcinoma</tissue>
    </source>
</reference>
<reference key="8">
    <citation type="journal article" date="2009" name="Mol. Cell. Proteomics">
        <title>Large-scale proteomics analysis of the human kinome.</title>
        <authorList>
            <person name="Oppermann F.S."/>
            <person name="Gnad F."/>
            <person name="Olsen J.V."/>
            <person name="Hornberger R."/>
            <person name="Greff Z."/>
            <person name="Keri G."/>
            <person name="Mann M."/>
            <person name="Daub H."/>
        </authorList>
    </citation>
    <scope>PHOSPHORYLATION [LARGE SCALE ANALYSIS] AT SER-984; SER-1129 AND SER-1149</scope>
    <scope>IDENTIFICATION BY MASS SPECTROMETRY [LARGE SCALE ANALYSIS]</scope>
</reference>
<reference key="9">
    <citation type="journal article" date="2013" name="J. Proteome Res.">
        <title>Toward a comprehensive characterization of a human cancer cell phosphoproteome.</title>
        <authorList>
            <person name="Zhou H."/>
            <person name="Di Palma S."/>
            <person name="Preisinger C."/>
            <person name="Peng M."/>
            <person name="Polat A.N."/>
            <person name="Heck A.J."/>
            <person name="Mohammed S."/>
        </authorList>
    </citation>
    <scope>PHOSPHORYLATION [LARGE SCALE ANALYSIS] AT SER-964; SER-984 AND SER-1129</scope>
    <scope>IDENTIFICATION BY MASS SPECTROMETRY [LARGE SCALE ANALYSIS]</scope>
    <source>
        <tissue>Cervix carcinoma</tissue>
        <tissue>Erythroleukemia</tissue>
    </source>
</reference>
<reference key="10">
    <citation type="journal article" date="2006" name="Science">
        <title>The consensus coding sequences of human breast and colorectal cancers.</title>
        <authorList>
            <person name="Sjoeblom T."/>
            <person name="Jones S."/>
            <person name="Wood L.D."/>
            <person name="Parsons D.W."/>
            <person name="Lin J."/>
            <person name="Barber T.D."/>
            <person name="Mandelker D."/>
            <person name="Leary R.J."/>
            <person name="Ptak J."/>
            <person name="Silliman N."/>
            <person name="Szabo S."/>
            <person name="Buckhaults P."/>
            <person name="Farrell C."/>
            <person name="Meeh P."/>
            <person name="Markowitz S.D."/>
            <person name="Willis J."/>
            <person name="Dawson D."/>
            <person name="Willson J.K.V."/>
            <person name="Gazdar A.F."/>
            <person name="Hartigan J."/>
            <person name="Wu L."/>
            <person name="Liu C."/>
            <person name="Parmigiani G."/>
            <person name="Park B.H."/>
            <person name="Bachman K.E."/>
            <person name="Papadopoulos N."/>
            <person name="Vogelstein B."/>
            <person name="Kinzler K.W."/>
            <person name="Velculescu V.E."/>
        </authorList>
    </citation>
    <scope>VARIANT [LARGE SCALE ANALYSIS] THR-869</scope>
</reference>
<reference key="11">
    <citation type="journal article" date="2007" name="Nature">
        <title>Patterns of somatic mutation in human cancer genomes.</title>
        <authorList>
            <person name="Greenman C."/>
            <person name="Stephens P."/>
            <person name="Smith R."/>
            <person name="Dalgliesh G.L."/>
            <person name="Hunter C."/>
            <person name="Bignell G."/>
            <person name="Davies H."/>
            <person name="Teague J."/>
            <person name="Butler A."/>
            <person name="Stevens C."/>
            <person name="Edkins S."/>
            <person name="O'Meara S."/>
            <person name="Vastrik I."/>
            <person name="Schmidt E.E."/>
            <person name="Avis T."/>
            <person name="Barthorpe S."/>
            <person name="Bhamra G."/>
            <person name="Buck G."/>
            <person name="Choudhury B."/>
            <person name="Clements J."/>
            <person name="Cole J."/>
            <person name="Dicks E."/>
            <person name="Forbes S."/>
            <person name="Gray K."/>
            <person name="Halliday K."/>
            <person name="Harrison R."/>
            <person name="Hills K."/>
            <person name="Hinton J."/>
            <person name="Jenkinson A."/>
            <person name="Jones D."/>
            <person name="Menzies A."/>
            <person name="Mironenko T."/>
            <person name="Perry J."/>
            <person name="Raine K."/>
            <person name="Richardson D."/>
            <person name="Shepherd R."/>
            <person name="Small A."/>
            <person name="Tofts C."/>
            <person name="Varian J."/>
            <person name="Webb T."/>
            <person name="West S."/>
            <person name="Widaa S."/>
            <person name="Yates A."/>
            <person name="Cahill D.P."/>
            <person name="Louis D.N."/>
            <person name="Goldstraw P."/>
            <person name="Nicholson A.G."/>
            <person name="Brasseur F."/>
            <person name="Looijenga L."/>
            <person name="Weber B.L."/>
            <person name="Chiew Y.-E."/>
            <person name="DeFazio A."/>
            <person name="Greaves M.F."/>
            <person name="Green A.R."/>
            <person name="Campbell P."/>
            <person name="Birney E."/>
            <person name="Easton D.F."/>
            <person name="Chenevix-Trench G."/>
            <person name="Tan M.-H."/>
            <person name="Khoo S.K."/>
            <person name="Teh B.T."/>
            <person name="Yuen S.T."/>
            <person name="Leung S.Y."/>
            <person name="Wooster R."/>
            <person name="Futreal P.A."/>
            <person name="Stratton M.R."/>
        </authorList>
    </citation>
    <scope>VARIANTS [LARGE SCALE ANALYSIS] TRP-544; LYS-622; GLY-668; LEU-673; LEU-925; ILE-968 AND THR-1061</scope>
</reference>
<accession>O95382</accession>
<accession>A2ACE8</accession>
<accession>A2VDG4</accession>
<accession>A2VDG5</accession>
<accession>Q59HF4</accession>
<accession>Q5SSD4</accession>
<accession>Q75PK3</accession>
<accession>Q96B75</accession>
<proteinExistence type="evidence at protein level"/>